<evidence type="ECO:0000250" key="1">
    <source>
        <dbReference type="UniProtKB" id="Q12255"/>
    </source>
</evidence>
<evidence type="ECO:0000255" key="2"/>
<evidence type="ECO:0000255" key="3">
    <source>
        <dbReference type="PROSITE-ProRule" id="PRU00231"/>
    </source>
</evidence>
<evidence type="ECO:0000255" key="4">
    <source>
        <dbReference type="PROSITE-ProRule" id="PRU00290"/>
    </source>
</evidence>
<evidence type="ECO:0000269" key="5">
    <source>
    </source>
</evidence>
<evidence type="ECO:0000303" key="6">
    <source>
    </source>
</evidence>
<evidence type="ECO:0000305" key="7"/>
<evidence type="ECO:0000305" key="8">
    <source>
    </source>
</evidence>
<evidence type="ECO:0000312" key="9">
    <source>
        <dbReference type="Araport" id="AT2G33110"/>
    </source>
</evidence>
<evidence type="ECO:0000312" key="10">
    <source>
        <dbReference type="EMBL" id="AEC08786.1"/>
    </source>
</evidence>
<proteinExistence type="evidence at transcript level"/>
<name>VA723_ARATH</name>
<keyword id="KW-0175">Coiled coil</keyword>
<keyword id="KW-0256">Endoplasmic reticulum</keyword>
<keyword id="KW-0472">Membrane</keyword>
<keyword id="KW-0653">Protein transport</keyword>
<keyword id="KW-1185">Reference proteome</keyword>
<keyword id="KW-0812">Transmembrane</keyword>
<keyword id="KW-1133">Transmembrane helix</keyword>
<keyword id="KW-0813">Transport</keyword>
<sequence length="217" mass="24493">MAQQSLFYSFIARGTVILVEFTDFKGNFTSVAAQYLENLPSSNNKFTYNCDGHTFNDLVENGFTYCVVAVDSAGREIPMAFLERVKEDFYKRYGGEKAATDQANSLNKEFGSNLKEHMQYCMDHPDEISNLAKAKAQVSEVKSLMMENIEKVLARGVICEMLGSSESQPQAFYIKRTQMKRKKWFQNMKIKLIVLAIIIALILIIILSVCGGFNCGK</sequence>
<protein>
    <recommendedName>
        <fullName evidence="6">Vesicle-associated membrane protein 723</fullName>
        <shortName evidence="6">AtVAMP723</shortName>
    </recommendedName>
</protein>
<comment type="function">
    <text evidence="8">Involved in the targeting and/or fusion of transport vesicles to their target membrane.</text>
</comment>
<comment type="subcellular location">
    <subcellularLocation>
        <location evidence="5">Endoplasmic reticulum membrane</location>
        <topology evidence="1">Single-pass type IV membrane protein</topology>
    </subcellularLocation>
</comment>
<comment type="tissue specificity">
    <text evidence="5">Highly expressed in stems and roots. Detected in flowers and leaves.</text>
</comment>
<comment type="similarity">
    <text evidence="7">Belongs to the synaptobrevin family.</text>
</comment>
<comment type="sequence caution" evidence="7">
    <conflict type="erroneous gene model prediction">
        <sequence resource="EMBL-CDS" id="AAC04922"/>
    </conflict>
</comment>
<gene>
    <name evidence="6" type="primary">VAMP723</name>
    <name evidence="9" type="ordered locus">At2g33110</name>
    <name evidence="10" type="ORF">F25I18.15</name>
</gene>
<feature type="chain" id="PRO_0000206756" description="Vesicle-associated membrane protein 723">
    <location>
        <begin position="1"/>
        <end position="217"/>
    </location>
</feature>
<feature type="topological domain" description="Cytoplasmic" evidence="2">
    <location>
        <begin position="1"/>
        <end position="192"/>
    </location>
</feature>
<feature type="transmembrane region" description="Helical; Anchor for type IV membrane protein" evidence="2">
    <location>
        <begin position="193"/>
        <end position="213"/>
    </location>
</feature>
<feature type="topological domain" description="Vesicular" evidence="2">
    <location>
        <begin position="214"/>
        <end position="217"/>
    </location>
</feature>
<feature type="domain" description="Longin" evidence="3">
    <location>
        <begin position="10"/>
        <end position="114"/>
    </location>
</feature>
<feature type="domain" description="v-SNARE coiled-coil homology" evidence="4">
    <location>
        <begin position="130"/>
        <end position="186"/>
    </location>
</feature>
<accession>Q8VY69</accession>
<accession>O49322</accession>
<reference key="1">
    <citation type="journal article" date="1999" name="Nature">
        <title>Sequence and analysis of chromosome 2 of the plant Arabidopsis thaliana.</title>
        <authorList>
            <person name="Lin X."/>
            <person name="Kaul S."/>
            <person name="Rounsley S.D."/>
            <person name="Shea T.P."/>
            <person name="Benito M.-I."/>
            <person name="Town C.D."/>
            <person name="Fujii C.Y."/>
            <person name="Mason T.M."/>
            <person name="Bowman C.L."/>
            <person name="Barnstead M.E."/>
            <person name="Feldblyum T.V."/>
            <person name="Buell C.R."/>
            <person name="Ketchum K.A."/>
            <person name="Lee J.J."/>
            <person name="Ronning C.M."/>
            <person name="Koo H.L."/>
            <person name="Moffat K.S."/>
            <person name="Cronin L.A."/>
            <person name="Shen M."/>
            <person name="Pai G."/>
            <person name="Van Aken S."/>
            <person name="Umayam L."/>
            <person name="Tallon L.J."/>
            <person name="Gill J.E."/>
            <person name="Adams M.D."/>
            <person name="Carrera A.J."/>
            <person name="Creasy T.H."/>
            <person name="Goodman H.M."/>
            <person name="Somerville C.R."/>
            <person name="Copenhaver G.P."/>
            <person name="Preuss D."/>
            <person name="Nierman W.C."/>
            <person name="White O."/>
            <person name="Eisen J.A."/>
            <person name="Salzberg S.L."/>
            <person name="Fraser C.M."/>
            <person name="Venter J.C."/>
        </authorList>
    </citation>
    <scope>NUCLEOTIDE SEQUENCE [LARGE SCALE GENOMIC DNA]</scope>
    <source>
        <strain>cv. Columbia</strain>
    </source>
</reference>
<reference key="2">
    <citation type="journal article" date="2017" name="Plant J.">
        <title>Araport11: a complete reannotation of the Arabidopsis thaliana reference genome.</title>
        <authorList>
            <person name="Cheng C.Y."/>
            <person name="Krishnakumar V."/>
            <person name="Chan A.P."/>
            <person name="Thibaud-Nissen F."/>
            <person name="Schobel S."/>
            <person name="Town C.D."/>
        </authorList>
    </citation>
    <scope>GENOME REANNOTATION</scope>
    <source>
        <strain>cv. Columbia</strain>
    </source>
</reference>
<reference key="3">
    <citation type="journal article" date="2003" name="Science">
        <title>Empirical analysis of transcriptional activity in the Arabidopsis genome.</title>
        <authorList>
            <person name="Yamada K."/>
            <person name="Lim J."/>
            <person name="Dale J.M."/>
            <person name="Chen H."/>
            <person name="Shinn P."/>
            <person name="Palm C.J."/>
            <person name="Southwick A.M."/>
            <person name="Wu H.C."/>
            <person name="Kim C.J."/>
            <person name="Nguyen M."/>
            <person name="Pham P.K."/>
            <person name="Cheuk R.F."/>
            <person name="Karlin-Newmann G."/>
            <person name="Liu S.X."/>
            <person name="Lam B."/>
            <person name="Sakano H."/>
            <person name="Wu T."/>
            <person name="Yu G."/>
            <person name="Miranda M."/>
            <person name="Quach H.L."/>
            <person name="Tripp M."/>
            <person name="Chang C.H."/>
            <person name="Lee J.M."/>
            <person name="Toriumi M.J."/>
            <person name="Chan M.M."/>
            <person name="Tang C.C."/>
            <person name="Onodera C.S."/>
            <person name="Deng J.M."/>
            <person name="Akiyama K."/>
            <person name="Ansari Y."/>
            <person name="Arakawa T."/>
            <person name="Banh J."/>
            <person name="Banno F."/>
            <person name="Bowser L."/>
            <person name="Brooks S.Y."/>
            <person name="Carninci P."/>
            <person name="Chao Q."/>
            <person name="Choy N."/>
            <person name="Enju A."/>
            <person name="Goldsmith A.D."/>
            <person name="Gurjal M."/>
            <person name="Hansen N.F."/>
            <person name="Hayashizaki Y."/>
            <person name="Johnson-Hopson C."/>
            <person name="Hsuan V.W."/>
            <person name="Iida K."/>
            <person name="Karnes M."/>
            <person name="Khan S."/>
            <person name="Koesema E."/>
            <person name="Ishida J."/>
            <person name="Jiang P.X."/>
            <person name="Jones T."/>
            <person name="Kawai J."/>
            <person name="Kamiya A."/>
            <person name="Meyers C."/>
            <person name="Nakajima M."/>
            <person name="Narusaka M."/>
            <person name="Seki M."/>
            <person name="Sakurai T."/>
            <person name="Satou M."/>
            <person name="Tamse R."/>
            <person name="Vaysberg M."/>
            <person name="Wallender E.K."/>
            <person name="Wong C."/>
            <person name="Yamamura Y."/>
            <person name="Yuan S."/>
            <person name="Shinozaki K."/>
            <person name="Davis R.W."/>
            <person name="Theologis A."/>
            <person name="Ecker J.R."/>
        </authorList>
    </citation>
    <scope>NUCLEOTIDE SEQUENCE [LARGE SCALE MRNA]</scope>
    <source>
        <strain>cv. Columbia</strain>
    </source>
</reference>
<reference key="4">
    <citation type="journal article" date="2000" name="Plant Physiol.">
        <title>The Arabidopsis genome. An abundance of soluble N-ethylmaleimide-sensitive factor adaptor protein receptors.</title>
        <authorList>
            <person name="Sanderfoot A.A."/>
            <person name="Assaad F.F."/>
            <person name="Raikhel N.V."/>
        </authorList>
    </citation>
    <scope>GENE FAMILY</scope>
    <scope>NOMENCLATURE</scope>
</reference>
<reference key="5">
    <citation type="journal article" date="2004" name="Cell Struct. Funct.">
        <title>Systematic analysis of SNARE molecules in Arabidopsis: dissection of the post-Golgi network in plant cells.</title>
        <authorList>
            <person name="Uemura T."/>
            <person name="Ueda T."/>
            <person name="Ohniwa R.L."/>
            <person name="Nakano A."/>
            <person name="Takeyasu K."/>
            <person name="Sato M.H."/>
        </authorList>
    </citation>
    <scope>TISSUE SPECIFICITY</scope>
    <scope>SUBCELLULAR LOCATION</scope>
</reference>
<organism>
    <name type="scientific">Arabidopsis thaliana</name>
    <name type="common">Mouse-ear cress</name>
    <dbReference type="NCBI Taxonomy" id="3702"/>
    <lineage>
        <taxon>Eukaryota</taxon>
        <taxon>Viridiplantae</taxon>
        <taxon>Streptophyta</taxon>
        <taxon>Embryophyta</taxon>
        <taxon>Tracheophyta</taxon>
        <taxon>Spermatophyta</taxon>
        <taxon>Magnoliopsida</taxon>
        <taxon>eudicotyledons</taxon>
        <taxon>Gunneridae</taxon>
        <taxon>Pentapetalae</taxon>
        <taxon>rosids</taxon>
        <taxon>malvids</taxon>
        <taxon>Brassicales</taxon>
        <taxon>Brassicaceae</taxon>
        <taxon>Camelineae</taxon>
        <taxon>Arabidopsis</taxon>
    </lineage>
</organism>
<dbReference type="EMBL" id="AC002334">
    <property type="protein sequence ID" value="AAC04922.1"/>
    <property type="status" value="ALT_SEQ"/>
    <property type="molecule type" value="Genomic_DNA"/>
</dbReference>
<dbReference type="EMBL" id="CP002685">
    <property type="protein sequence ID" value="AEC08786.1"/>
    <property type="molecule type" value="Genomic_DNA"/>
</dbReference>
<dbReference type="EMBL" id="AY072400">
    <property type="protein sequence ID" value="AAL62392.1"/>
    <property type="molecule type" value="mRNA"/>
</dbReference>
<dbReference type="EMBL" id="BT000209">
    <property type="protein sequence ID" value="AAN15528.1"/>
    <property type="molecule type" value="mRNA"/>
</dbReference>
<dbReference type="PIR" id="E84741">
    <property type="entry name" value="E84741"/>
</dbReference>
<dbReference type="RefSeq" id="NP_850201.1">
    <property type="nucleotide sequence ID" value="NM_179870.4"/>
</dbReference>
<dbReference type="SMR" id="Q8VY69"/>
<dbReference type="BioGRID" id="3220">
    <property type="interactions" value="8"/>
</dbReference>
<dbReference type="FunCoup" id="Q8VY69">
    <property type="interactions" value="5"/>
</dbReference>
<dbReference type="IntAct" id="Q8VY69">
    <property type="interactions" value="8"/>
</dbReference>
<dbReference type="STRING" id="3702.Q8VY69"/>
<dbReference type="PaxDb" id="3702-AT2G33110.1"/>
<dbReference type="ProteomicsDB" id="243254"/>
<dbReference type="EnsemblPlants" id="AT2G33110.1">
    <property type="protein sequence ID" value="AT2G33110.1"/>
    <property type="gene ID" value="AT2G33110"/>
</dbReference>
<dbReference type="GeneID" id="817873"/>
<dbReference type="Gramene" id="AT2G33110.1">
    <property type="protein sequence ID" value="AT2G33110.1"/>
    <property type="gene ID" value="AT2G33110"/>
</dbReference>
<dbReference type="KEGG" id="ath:AT2G33110"/>
<dbReference type="Araport" id="AT2G33110"/>
<dbReference type="TAIR" id="AT2G33110">
    <property type="gene designation" value="VAMP723"/>
</dbReference>
<dbReference type="eggNOG" id="KOG0859">
    <property type="taxonomic scope" value="Eukaryota"/>
</dbReference>
<dbReference type="HOGENOM" id="CLU_064620_1_0_1"/>
<dbReference type="InParanoid" id="Q8VY69"/>
<dbReference type="PhylomeDB" id="Q8VY69"/>
<dbReference type="PRO" id="PR:Q8VY69"/>
<dbReference type="Proteomes" id="UP000006548">
    <property type="component" value="Chromosome 2"/>
</dbReference>
<dbReference type="ExpressionAtlas" id="Q8VY69">
    <property type="expression patterns" value="baseline and differential"/>
</dbReference>
<dbReference type="GO" id="GO:0005783">
    <property type="term" value="C:endoplasmic reticulum"/>
    <property type="evidence" value="ECO:0000304"/>
    <property type="project" value="TAIR"/>
</dbReference>
<dbReference type="GO" id="GO:0005789">
    <property type="term" value="C:endoplasmic reticulum membrane"/>
    <property type="evidence" value="ECO:0007669"/>
    <property type="project" value="UniProtKB-SubCell"/>
</dbReference>
<dbReference type="GO" id="GO:0015031">
    <property type="term" value="P:protein transport"/>
    <property type="evidence" value="ECO:0007669"/>
    <property type="project" value="UniProtKB-KW"/>
</dbReference>
<dbReference type="GO" id="GO:0016192">
    <property type="term" value="P:vesicle-mediated transport"/>
    <property type="evidence" value="ECO:0007669"/>
    <property type="project" value="InterPro"/>
</dbReference>
<dbReference type="CDD" id="cd14824">
    <property type="entry name" value="Longin"/>
    <property type="match status" value="1"/>
</dbReference>
<dbReference type="CDD" id="cd15843">
    <property type="entry name" value="R-SNARE"/>
    <property type="match status" value="1"/>
</dbReference>
<dbReference type="FunFam" id="3.30.450.50:FF:000014">
    <property type="entry name" value="vesicle-associated membrane protein 727"/>
    <property type="match status" value="1"/>
</dbReference>
<dbReference type="Gene3D" id="1.20.5.110">
    <property type="match status" value="1"/>
</dbReference>
<dbReference type="Gene3D" id="3.30.450.50">
    <property type="entry name" value="Longin domain"/>
    <property type="match status" value="1"/>
</dbReference>
<dbReference type="InterPro" id="IPR011012">
    <property type="entry name" value="Longin-like_dom_sf"/>
</dbReference>
<dbReference type="InterPro" id="IPR010908">
    <property type="entry name" value="Longin_dom"/>
</dbReference>
<dbReference type="InterPro" id="IPR001388">
    <property type="entry name" value="Synaptobrevin-like"/>
</dbReference>
<dbReference type="InterPro" id="IPR051097">
    <property type="entry name" value="Synaptobrevin-like_transport"/>
</dbReference>
<dbReference type="InterPro" id="IPR042855">
    <property type="entry name" value="V_SNARE_CC"/>
</dbReference>
<dbReference type="PANTHER" id="PTHR21136">
    <property type="entry name" value="SNARE PROTEINS"/>
    <property type="match status" value="1"/>
</dbReference>
<dbReference type="PANTHER" id="PTHR21136:SF188">
    <property type="entry name" value="VESICLE-ASSOCIATED MEMBRANE PROTEIN 722-RELATED"/>
    <property type="match status" value="1"/>
</dbReference>
<dbReference type="Pfam" id="PF13774">
    <property type="entry name" value="Longin"/>
    <property type="match status" value="1"/>
</dbReference>
<dbReference type="Pfam" id="PF00957">
    <property type="entry name" value="Synaptobrevin"/>
    <property type="match status" value="1"/>
</dbReference>
<dbReference type="PRINTS" id="PR00219">
    <property type="entry name" value="SYNAPTOBREVN"/>
</dbReference>
<dbReference type="SMART" id="SM01270">
    <property type="entry name" value="Longin"/>
    <property type="match status" value="1"/>
</dbReference>
<dbReference type="SUPFAM" id="SSF58038">
    <property type="entry name" value="SNARE fusion complex"/>
    <property type="match status" value="1"/>
</dbReference>
<dbReference type="SUPFAM" id="SSF64356">
    <property type="entry name" value="SNARE-like"/>
    <property type="match status" value="1"/>
</dbReference>
<dbReference type="PROSITE" id="PS50859">
    <property type="entry name" value="LONGIN"/>
    <property type="match status" value="1"/>
</dbReference>
<dbReference type="PROSITE" id="PS50892">
    <property type="entry name" value="V_SNARE"/>
    <property type="match status" value="1"/>
</dbReference>